<dbReference type="EMBL" id="BC077325">
    <property type="protein sequence ID" value="AAH77325.1"/>
    <property type="molecule type" value="mRNA"/>
</dbReference>
<dbReference type="RefSeq" id="NP_001086700.1">
    <property type="nucleotide sequence ID" value="NM_001093231.1"/>
</dbReference>
<dbReference type="SMR" id="Q6DE21"/>
<dbReference type="DNASU" id="446535"/>
<dbReference type="GeneID" id="446535"/>
<dbReference type="KEGG" id="xla:446535"/>
<dbReference type="AGR" id="Xenbase:XB-GENE-17339337"/>
<dbReference type="CTD" id="446535"/>
<dbReference type="Xenbase" id="XB-GENE-17339337">
    <property type="gene designation" value="tmem120b.S"/>
</dbReference>
<dbReference type="OMA" id="YFYLAMA"/>
<dbReference type="OrthoDB" id="2015098at2759"/>
<dbReference type="Proteomes" id="UP000186698">
    <property type="component" value="Chromosome 1S"/>
</dbReference>
<dbReference type="Bgee" id="446535">
    <property type="expression patterns" value="Expressed in muscle tissue and 19 other cell types or tissues"/>
</dbReference>
<dbReference type="GO" id="GO:0005637">
    <property type="term" value="C:nuclear inner membrane"/>
    <property type="evidence" value="ECO:0000318"/>
    <property type="project" value="GO_Central"/>
</dbReference>
<dbReference type="GO" id="GO:0045444">
    <property type="term" value="P:fat cell differentiation"/>
    <property type="evidence" value="ECO:0000318"/>
    <property type="project" value="GO_Central"/>
</dbReference>
<dbReference type="InterPro" id="IPR012926">
    <property type="entry name" value="TMEM120A/B"/>
</dbReference>
<dbReference type="PANTHER" id="PTHR21433:SF2">
    <property type="entry name" value="TRANSMEMBRANE PROTEIN 120B"/>
    <property type="match status" value="1"/>
</dbReference>
<dbReference type="PANTHER" id="PTHR21433">
    <property type="entry name" value="TRANSMEMBRANE PROTEIN INDUCED BY TUMOR NECROSIS FACTOR ALPHA"/>
    <property type="match status" value="1"/>
</dbReference>
<dbReference type="Pfam" id="PF07851">
    <property type="entry name" value="TMEM120A-B"/>
    <property type="match status" value="1"/>
</dbReference>
<accession>Q6DE21</accession>
<proteinExistence type="evidence at transcript level"/>
<gene>
    <name type="primary">tmem120b-b</name>
</gene>
<organism>
    <name type="scientific">Xenopus laevis</name>
    <name type="common">African clawed frog</name>
    <dbReference type="NCBI Taxonomy" id="8355"/>
    <lineage>
        <taxon>Eukaryota</taxon>
        <taxon>Metazoa</taxon>
        <taxon>Chordata</taxon>
        <taxon>Craniata</taxon>
        <taxon>Vertebrata</taxon>
        <taxon>Euteleostomi</taxon>
        <taxon>Amphibia</taxon>
        <taxon>Batrachia</taxon>
        <taxon>Anura</taxon>
        <taxon>Pipoidea</taxon>
        <taxon>Pipidae</taxon>
        <taxon>Xenopodinae</taxon>
        <taxon>Xenopus</taxon>
        <taxon>Xenopus</taxon>
    </lineage>
</organism>
<comment type="function">
    <text evidence="1">Necessary for efficient adipogenesis. Does not show ion channel activity.</text>
</comment>
<comment type="subcellular location">
    <subcellularLocation>
        <location evidence="1">Nucleus inner membrane</location>
        <topology evidence="2">Multi-pass membrane protein</topology>
    </subcellularLocation>
</comment>
<comment type="similarity">
    <text evidence="3">Belongs to the TMEM120 family.</text>
</comment>
<protein>
    <recommendedName>
        <fullName>Transmembrane protein 120B-B</fullName>
    </recommendedName>
</protein>
<feature type="chain" id="PRO_0000309533" description="Transmembrane protein 120B-B">
    <location>
        <begin position="1"/>
        <end position="335"/>
    </location>
</feature>
<feature type="transmembrane region" description="Helical" evidence="2">
    <location>
        <begin position="100"/>
        <end position="116"/>
    </location>
</feature>
<feature type="transmembrane region" description="Helical" evidence="2">
    <location>
        <begin position="130"/>
        <end position="150"/>
    </location>
</feature>
<feature type="transmembrane region" description="Helical" evidence="2">
    <location>
        <begin position="157"/>
        <end position="177"/>
    </location>
</feature>
<feature type="transmembrane region" description="Helical" evidence="2">
    <location>
        <begin position="193"/>
        <end position="213"/>
    </location>
</feature>
<feature type="transmembrane region" description="Helical" evidence="2">
    <location>
        <begin position="268"/>
        <end position="288"/>
    </location>
</feature>
<feature type="transmembrane region" description="Helical" evidence="2">
    <location>
        <begin position="300"/>
        <end position="320"/>
    </location>
</feature>
<feature type="coiled-coil region" evidence="2">
    <location>
        <begin position="1"/>
        <end position="39"/>
    </location>
</feature>
<keyword id="KW-0175">Coiled coil</keyword>
<keyword id="KW-0472">Membrane</keyword>
<keyword id="KW-0539">Nucleus</keyword>
<keyword id="KW-1185">Reference proteome</keyword>
<keyword id="KW-0812">Transmembrane</keyword>
<keyword id="KW-1133">Transmembrane helix</keyword>
<reference key="1">
    <citation type="submission" date="2004-07" db="EMBL/GenBank/DDBJ databases">
        <authorList>
            <consortium name="NIH - Xenopus Gene Collection (XGC) project"/>
        </authorList>
    </citation>
    <scope>NUCLEOTIDE SEQUENCE [LARGE SCALE MRNA]</scope>
    <source>
        <tissue>Ovary</tissue>
    </source>
</reference>
<name>T12BB_XENLA</name>
<sequence>MSLQKCQEEWGELEKEFQQLQETHKVYKQKLEELSSLQNLCSSYINKHKRRLTELKGNLHGYKHTSNLEEKELIQQIDGTIKERHNAFFDMEAYLPKKNSLYLNLVLGNVNVTLLSKQTKFAYKDEYEKFKLYLTIILLLGAITCRFVLHYRVTDEVFNFLLVWYFCTLTIRESILISNGSRIKGWWVSHHYVSTFLSGVMLTWPDGLMYQMFRNQFLAFSIFQSCVQFLQYYYQSGCLYRLRALGERNHLHLTVEGFQSWMWRGLTFLLPVLFFGHFWQLYNAMTLFGLSRHEECKEWQVFVLALTFLLLFLGNFLTTLKVVHTKFQKNKLKKP</sequence>
<evidence type="ECO:0000250" key="1">
    <source>
        <dbReference type="UniProtKB" id="Q3TA38"/>
    </source>
</evidence>
<evidence type="ECO:0000255" key="2"/>
<evidence type="ECO:0000305" key="3"/>